<geneLocation type="mitochondrion"/>
<dbReference type="EMBL" id="Y08501">
    <property type="protein sequence ID" value="CAA69788.1"/>
    <property type="molecule type" value="Genomic_DNA"/>
</dbReference>
<dbReference type="EMBL" id="BK010421">
    <property type="status" value="NOT_ANNOTATED_CDS"/>
    <property type="molecule type" value="Genomic_DNA"/>
</dbReference>
<dbReference type="RefSeq" id="NP_085590.1">
    <property type="nucleotide sequence ID" value="NC_001284.2"/>
</dbReference>
<dbReference type="STRING" id="3702.P92567"/>
<dbReference type="PaxDb" id="3702-ATMG01410.1"/>
<dbReference type="EnsemblPlants" id="ATMG01410.1">
    <property type="protein sequence ID" value="ATMG01410.1"/>
    <property type="gene ID" value="ATMG01410"/>
</dbReference>
<dbReference type="Gramene" id="ATMG01410.1">
    <property type="protein sequence ID" value="ATMG01410.1"/>
    <property type="gene ID" value="ATMG01410"/>
</dbReference>
<dbReference type="Araport" id="ATMG01410"/>
<dbReference type="TAIR" id="ATMG01410">
    <property type="gene designation" value="ORF204"/>
</dbReference>
<dbReference type="eggNOG" id="ENOG502S5E8">
    <property type="taxonomic scope" value="Eukaryota"/>
</dbReference>
<dbReference type="HOGENOM" id="CLU_1344901_0_0_1"/>
<dbReference type="InParanoid" id="P92567"/>
<dbReference type="OMA" id="HYMVWLA"/>
<dbReference type="PRO" id="PR:P92567"/>
<dbReference type="Proteomes" id="UP000006548">
    <property type="component" value="Mitochondrion MT"/>
</dbReference>
<dbReference type="GO" id="GO:0005739">
    <property type="term" value="C:mitochondrion"/>
    <property type="evidence" value="ECO:0007669"/>
    <property type="project" value="UniProtKB-SubCell"/>
</dbReference>
<dbReference type="InterPro" id="IPR043502">
    <property type="entry name" value="DNA/RNA_pol_sf"/>
</dbReference>
<dbReference type="InterPro" id="IPR008686">
    <property type="entry name" value="RNA_pol_mitovir"/>
</dbReference>
<dbReference type="PANTHER" id="PTHR34456">
    <property type="entry name" value="MITOVIRUS RNA-DEPENDENT RNA POLYMERASE"/>
    <property type="match status" value="1"/>
</dbReference>
<dbReference type="PANTHER" id="PTHR34456:SF13">
    <property type="entry name" value="REVERSE TRANSCRIPTASE DOMAIN-CONTAINING PROTEIN"/>
    <property type="match status" value="1"/>
</dbReference>
<dbReference type="Pfam" id="PF05919">
    <property type="entry name" value="Mitovir_RNA_pol"/>
    <property type="match status" value="1"/>
</dbReference>
<dbReference type="SUPFAM" id="SSF56672">
    <property type="entry name" value="DNA/RNA polymerases"/>
    <property type="match status" value="1"/>
</dbReference>
<comment type="subcellular location">
    <subcellularLocation>
        <location evidence="1">Mitochondrion</location>
    </subcellularLocation>
</comment>
<reference key="1">
    <citation type="journal article" date="1997" name="Nat. Genet.">
        <title>The mitochondrial genome of Arabidopsis thaliana contains 57 genes in 366,924 nucleotides.</title>
        <authorList>
            <person name="Unseld M."/>
            <person name="Marienfeld J.R."/>
            <person name="Brandt P."/>
            <person name="Brennicke A."/>
        </authorList>
    </citation>
    <scope>NUCLEOTIDE SEQUENCE [LARGE SCALE GENOMIC DNA]</scope>
    <source>
        <strain>cv. C24</strain>
    </source>
</reference>
<reference key="2">
    <citation type="journal article" date="2018" name="Plant Cell">
        <title>Correction of persistent errors in Arabidopsis reference mitochondrial genomes.</title>
        <authorList>
            <person name="Sloan D.B."/>
            <person name="Wu Z."/>
            <person name="Sharbrough J."/>
        </authorList>
    </citation>
    <scope>NUCLEOTIDE SEQUENCE [LARGE SCALE GENOMIC DNA]</scope>
    <source>
        <strain>cv. Columbia</strain>
    </source>
</reference>
<proteinExistence type="predicted"/>
<keyword id="KW-0496">Mitochondrion</keyword>
<keyword id="KW-1185">Reference proteome</keyword>
<feature type="chain" id="PRO_0000196831" description="Uncharacterized mitochondrial protein AtMg01410">
    <location>
        <begin position="1"/>
        <end position="204"/>
    </location>
</feature>
<protein>
    <recommendedName>
        <fullName>Uncharacterized mitochondrial protein AtMg01410</fullName>
    </recommendedName>
    <alternativeName>
        <fullName>ORF204</fullName>
    </alternativeName>
</protein>
<organism>
    <name type="scientific">Arabidopsis thaliana</name>
    <name type="common">Mouse-ear cress</name>
    <dbReference type="NCBI Taxonomy" id="3702"/>
    <lineage>
        <taxon>Eukaryota</taxon>
        <taxon>Viridiplantae</taxon>
        <taxon>Streptophyta</taxon>
        <taxon>Embryophyta</taxon>
        <taxon>Tracheophyta</taxon>
        <taxon>Spermatophyta</taxon>
        <taxon>Magnoliopsida</taxon>
        <taxon>eudicotyledons</taxon>
        <taxon>Gunneridae</taxon>
        <taxon>Pentapetalae</taxon>
        <taxon>rosids</taxon>
        <taxon>malvids</taxon>
        <taxon>Brassicales</taxon>
        <taxon>Brassicaceae</taxon>
        <taxon>Camelineae</taxon>
        <taxon>Arabidopsis</taxon>
    </lineage>
</organism>
<evidence type="ECO:0000305" key="1"/>
<gene>
    <name type="ordered locus">AtMg01410</name>
</gene>
<accession>P92567</accession>
<accession>Q1ZXV1</accession>
<name>M1410_ARATH</name>
<sequence>MFGGRRRRLPQDGTFNQTQPFDRLVGSRHSFSFDLKSATDRWPLVFLFEVVQYLFDRSFASSVVNSAFACNIFEVPFVKLKRRFSQVCFVAGQPLGYHGSWPTFALSHHILVWWCAKQVHPGVRFTSYAVLGDDVVIADQEVAKVYESALGGLGVKISYQKSLIPIQVLLSLLNASGLGNLVLKREIFPRESGVLSLMSVPSLA</sequence>